<dbReference type="EMBL" id="CP000800">
    <property type="protein sequence ID" value="ABV20553.1"/>
    <property type="molecule type" value="Genomic_DNA"/>
</dbReference>
<dbReference type="RefSeq" id="WP_000906486.1">
    <property type="nucleotide sequence ID" value="NC_009801.1"/>
</dbReference>
<dbReference type="SMR" id="A7ZQC4"/>
<dbReference type="GeneID" id="98389839"/>
<dbReference type="KEGG" id="ecw:EcE24377A_2979"/>
<dbReference type="HOGENOM" id="CLU_164837_2_1_6"/>
<dbReference type="Proteomes" id="UP000001122">
    <property type="component" value="Chromosome"/>
</dbReference>
<dbReference type="GO" id="GO:0005829">
    <property type="term" value="C:cytosol"/>
    <property type="evidence" value="ECO:0007669"/>
    <property type="project" value="TreeGrafter"/>
</dbReference>
<dbReference type="GO" id="GO:0048027">
    <property type="term" value="F:mRNA 5'-UTR binding"/>
    <property type="evidence" value="ECO:0007669"/>
    <property type="project" value="UniProtKB-UniRule"/>
</dbReference>
<dbReference type="GO" id="GO:0006402">
    <property type="term" value="P:mRNA catabolic process"/>
    <property type="evidence" value="ECO:0007669"/>
    <property type="project" value="InterPro"/>
</dbReference>
<dbReference type="GO" id="GO:0045947">
    <property type="term" value="P:negative regulation of translational initiation"/>
    <property type="evidence" value="ECO:0007669"/>
    <property type="project" value="UniProtKB-UniRule"/>
</dbReference>
<dbReference type="GO" id="GO:0045948">
    <property type="term" value="P:positive regulation of translational initiation"/>
    <property type="evidence" value="ECO:0007669"/>
    <property type="project" value="UniProtKB-UniRule"/>
</dbReference>
<dbReference type="GO" id="GO:0006109">
    <property type="term" value="P:regulation of carbohydrate metabolic process"/>
    <property type="evidence" value="ECO:0007669"/>
    <property type="project" value="UniProtKB-UniRule"/>
</dbReference>
<dbReference type="FunFam" id="2.60.40.4380:FF:000001">
    <property type="entry name" value="Translational regulator CsrA"/>
    <property type="match status" value="1"/>
</dbReference>
<dbReference type="Gene3D" id="2.60.40.4380">
    <property type="entry name" value="Translational regulator CsrA"/>
    <property type="match status" value="1"/>
</dbReference>
<dbReference type="HAMAP" id="MF_00167">
    <property type="entry name" value="CsrA"/>
    <property type="match status" value="1"/>
</dbReference>
<dbReference type="InterPro" id="IPR003751">
    <property type="entry name" value="CsrA"/>
</dbReference>
<dbReference type="InterPro" id="IPR036107">
    <property type="entry name" value="CsrA_sf"/>
</dbReference>
<dbReference type="NCBIfam" id="TIGR00202">
    <property type="entry name" value="csrA"/>
    <property type="match status" value="1"/>
</dbReference>
<dbReference type="NCBIfam" id="NF002469">
    <property type="entry name" value="PRK01712.1"/>
    <property type="match status" value="1"/>
</dbReference>
<dbReference type="PANTHER" id="PTHR34984">
    <property type="entry name" value="CARBON STORAGE REGULATOR"/>
    <property type="match status" value="1"/>
</dbReference>
<dbReference type="PANTHER" id="PTHR34984:SF1">
    <property type="entry name" value="CARBON STORAGE REGULATOR"/>
    <property type="match status" value="1"/>
</dbReference>
<dbReference type="Pfam" id="PF02599">
    <property type="entry name" value="CsrA"/>
    <property type="match status" value="1"/>
</dbReference>
<dbReference type="SUPFAM" id="SSF117130">
    <property type="entry name" value="CsrA-like"/>
    <property type="match status" value="1"/>
</dbReference>
<evidence type="ECO:0000255" key="1">
    <source>
        <dbReference type="HAMAP-Rule" id="MF_00167"/>
    </source>
</evidence>
<accession>A7ZQC4</accession>
<protein>
    <recommendedName>
        <fullName evidence="1">Translational regulator CsrA</fullName>
    </recommendedName>
    <alternativeName>
        <fullName evidence="1">Carbon storage regulator</fullName>
    </alternativeName>
</protein>
<gene>
    <name evidence="1" type="primary">csrA</name>
    <name type="ordered locus">EcE24377A_2979</name>
</gene>
<feature type="chain" id="PRO_1000058268" description="Translational regulator CsrA">
    <location>
        <begin position="1"/>
        <end position="61"/>
    </location>
</feature>
<sequence length="61" mass="6856">MLILTRRVGETLMIGDEVTVTVLGVKGNQVRIGVNAPKEVSVHREEIYQRIQAEKSQQSSY</sequence>
<comment type="function">
    <text evidence="1">A key translational regulator that binds mRNA to regulate translation initiation and/or mRNA stability. Mediates global changes in gene expression, shifting from rapid growth to stress survival by linking envelope stress, the stringent response and the catabolite repression systems. Usually binds in the 5'-UTR; binding at or near the Shine-Dalgarno sequence prevents ribosome-binding, repressing translation, binding elsewhere in the 5'-UTR can activate translation and/or stabilize the mRNA. Its function is antagonized by small RNA(s).</text>
</comment>
<comment type="subunit">
    <text evidence="1">Homodimer; the beta-strands of each monomer intercalate to form a hydrophobic core, while the alpha-helices form wings that extend away from the core.</text>
</comment>
<comment type="subcellular location">
    <subcellularLocation>
        <location evidence="1">Cytoplasm</location>
    </subcellularLocation>
</comment>
<comment type="similarity">
    <text evidence="1">Belongs to the CsrA/RsmA family.</text>
</comment>
<reference key="1">
    <citation type="journal article" date="2008" name="J. Bacteriol.">
        <title>The pangenome structure of Escherichia coli: comparative genomic analysis of E. coli commensal and pathogenic isolates.</title>
        <authorList>
            <person name="Rasko D.A."/>
            <person name="Rosovitz M.J."/>
            <person name="Myers G.S.A."/>
            <person name="Mongodin E.F."/>
            <person name="Fricke W.F."/>
            <person name="Gajer P."/>
            <person name="Crabtree J."/>
            <person name="Sebaihia M."/>
            <person name="Thomson N.R."/>
            <person name="Chaudhuri R."/>
            <person name="Henderson I.R."/>
            <person name="Sperandio V."/>
            <person name="Ravel J."/>
        </authorList>
    </citation>
    <scope>NUCLEOTIDE SEQUENCE [LARGE SCALE GENOMIC DNA]</scope>
    <source>
        <strain>E24377A / ETEC</strain>
    </source>
</reference>
<name>CSRA_ECO24</name>
<keyword id="KW-0010">Activator</keyword>
<keyword id="KW-0963">Cytoplasm</keyword>
<keyword id="KW-1185">Reference proteome</keyword>
<keyword id="KW-0678">Repressor</keyword>
<keyword id="KW-0694">RNA-binding</keyword>
<keyword id="KW-0810">Translation regulation</keyword>
<organism>
    <name type="scientific">Escherichia coli O139:H28 (strain E24377A / ETEC)</name>
    <dbReference type="NCBI Taxonomy" id="331111"/>
    <lineage>
        <taxon>Bacteria</taxon>
        <taxon>Pseudomonadati</taxon>
        <taxon>Pseudomonadota</taxon>
        <taxon>Gammaproteobacteria</taxon>
        <taxon>Enterobacterales</taxon>
        <taxon>Enterobacteriaceae</taxon>
        <taxon>Escherichia</taxon>
    </lineage>
</organism>
<proteinExistence type="inferred from homology"/>